<sequence>MRLPQDIIIKPYITEKSNMEIGAGKYTFIVDVKSTKTEIKKAVEALFSVKVLQVNTMNFEGKVKRTGVHEGPRPAWKKAVVKIDTDPKPVEYLAKGGKTVTNNKKYKTSIEEFGVAQ</sequence>
<accession>B8I7Y1</accession>
<protein>
    <recommendedName>
        <fullName evidence="1">Large ribosomal subunit protein uL23</fullName>
    </recommendedName>
    <alternativeName>
        <fullName evidence="2">50S ribosomal protein L23</fullName>
    </alternativeName>
</protein>
<organism>
    <name type="scientific">Ruminiclostridium cellulolyticum (strain ATCC 35319 / DSM 5812 / JCM 6584 / H10)</name>
    <name type="common">Clostridium cellulolyticum</name>
    <dbReference type="NCBI Taxonomy" id="394503"/>
    <lineage>
        <taxon>Bacteria</taxon>
        <taxon>Bacillati</taxon>
        <taxon>Bacillota</taxon>
        <taxon>Clostridia</taxon>
        <taxon>Eubacteriales</taxon>
        <taxon>Oscillospiraceae</taxon>
        <taxon>Ruminiclostridium</taxon>
    </lineage>
</organism>
<evidence type="ECO:0000255" key="1">
    <source>
        <dbReference type="HAMAP-Rule" id="MF_01369"/>
    </source>
</evidence>
<evidence type="ECO:0000305" key="2"/>
<keyword id="KW-1185">Reference proteome</keyword>
<keyword id="KW-0687">Ribonucleoprotein</keyword>
<keyword id="KW-0689">Ribosomal protein</keyword>
<keyword id="KW-0694">RNA-binding</keyword>
<keyword id="KW-0699">rRNA-binding</keyword>
<gene>
    <name evidence="1" type="primary">rplW</name>
    <name type="ordered locus">Ccel_0760</name>
</gene>
<reference key="1">
    <citation type="submission" date="2009-01" db="EMBL/GenBank/DDBJ databases">
        <title>Complete sequence of Clostridium cellulolyticum H10.</title>
        <authorList>
            <consortium name="US DOE Joint Genome Institute"/>
            <person name="Lucas S."/>
            <person name="Copeland A."/>
            <person name="Lapidus A."/>
            <person name="Glavina del Rio T."/>
            <person name="Dalin E."/>
            <person name="Tice H."/>
            <person name="Bruce D."/>
            <person name="Goodwin L."/>
            <person name="Pitluck S."/>
            <person name="Chertkov O."/>
            <person name="Saunders E."/>
            <person name="Brettin T."/>
            <person name="Detter J.C."/>
            <person name="Han C."/>
            <person name="Larimer F."/>
            <person name="Land M."/>
            <person name="Hauser L."/>
            <person name="Kyrpides N."/>
            <person name="Ivanova N."/>
            <person name="Zhou J."/>
            <person name="Richardson P."/>
        </authorList>
    </citation>
    <scope>NUCLEOTIDE SEQUENCE [LARGE SCALE GENOMIC DNA]</scope>
    <source>
        <strain>ATCC 35319 / DSM 5812 / JCM 6584 / H10</strain>
    </source>
</reference>
<proteinExistence type="inferred from homology"/>
<dbReference type="EMBL" id="CP001348">
    <property type="protein sequence ID" value="ACL75138.1"/>
    <property type="molecule type" value="Genomic_DNA"/>
</dbReference>
<dbReference type="RefSeq" id="WP_015924303.1">
    <property type="nucleotide sequence ID" value="NC_011898.1"/>
</dbReference>
<dbReference type="SMR" id="B8I7Y1"/>
<dbReference type="STRING" id="394503.Ccel_0760"/>
<dbReference type="KEGG" id="cce:Ccel_0760"/>
<dbReference type="eggNOG" id="COG0089">
    <property type="taxonomic scope" value="Bacteria"/>
</dbReference>
<dbReference type="HOGENOM" id="CLU_037562_3_2_9"/>
<dbReference type="OrthoDB" id="9793353at2"/>
<dbReference type="Proteomes" id="UP000001349">
    <property type="component" value="Chromosome"/>
</dbReference>
<dbReference type="GO" id="GO:1990904">
    <property type="term" value="C:ribonucleoprotein complex"/>
    <property type="evidence" value="ECO:0007669"/>
    <property type="project" value="UniProtKB-KW"/>
</dbReference>
<dbReference type="GO" id="GO:0005840">
    <property type="term" value="C:ribosome"/>
    <property type="evidence" value="ECO:0007669"/>
    <property type="project" value="UniProtKB-KW"/>
</dbReference>
<dbReference type="GO" id="GO:0019843">
    <property type="term" value="F:rRNA binding"/>
    <property type="evidence" value="ECO:0007669"/>
    <property type="project" value="UniProtKB-UniRule"/>
</dbReference>
<dbReference type="GO" id="GO:0003735">
    <property type="term" value="F:structural constituent of ribosome"/>
    <property type="evidence" value="ECO:0007669"/>
    <property type="project" value="InterPro"/>
</dbReference>
<dbReference type="GO" id="GO:0006412">
    <property type="term" value="P:translation"/>
    <property type="evidence" value="ECO:0007669"/>
    <property type="project" value="UniProtKB-UniRule"/>
</dbReference>
<dbReference type="FunFam" id="3.30.70.330:FF:000001">
    <property type="entry name" value="50S ribosomal protein L23"/>
    <property type="match status" value="1"/>
</dbReference>
<dbReference type="Gene3D" id="3.30.70.330">
    <property type="match status" value="1"/>
</dbReference>
<dbReference type="HAMAP" id="MF_01369_B">
    <property type="entry name" value="Ribosomal_uL23_B"/>
    <property type="match status" value="1"/>
</dbReference>
<dbReference type="InterPro" id="IPR012677">
    <property type="entry name" value="Nucleotide-bd_a/b_plait_sf"/>
</dbReference>
<dbReference type="InterPro" id="IPR013025">
    <property type="entry name" value="Ribosomal_uL23-like"/>
</dbReference>
<dbReference type="InterPro" id="IPR012678">
    <property type="entry name" value="Ribosomal_uL23/eL15/eS24_sf"/>
</dbReference>
<dbReference type="NCBIfam" id="NF004363">
    <property type="entry name" value="PRK05738.2-4"/>
    <property type="match status" value="1"/>
</dbReference>
<dbReference type="PANTHER" id="PTHR11620">
    <property type="entry name" value="60S RIBOSOMAL PROTEIN L23A"/>
    <property type="match status" value="1"/>
</dbReference>
<dbReference type="Pfam" id="PF00276">
    <property type="entry name" value="Ribosomal_L23"/>
    <property type="match status" value="1"/>
</dbReference>
<dbReference type="SUPFAM" id="SSF54189">
    <property type="entry name" value="Ribosomal proteins S24e, L23 and L15e"/>
    <property type="match status" value="1"/>
</dbReference>
<comment type="function">
    <text evidence="1">One of the early assembly proteins it binds 23S rRNA. One of the proteins that surrounds the polypeptide exit tunnel on the outside of the ribosome. Forms the main docking site for trigger factor binding to the ribosome.</text>
</comment>
<comment type="subunit">
    <text evidence="1">Part of the 50S ribosomal subunit. Contacts protein L29, and trigger factor when it is bound to the ribosome.</text>
</comment>
<comment type="similarity">
    <text evidence="1">Belongs to the universal ribosomal protein uL23 family.</text>
</comment>
<feature type="chain" id="PRO_1000184078" description="Large ribosomal subunit protein uL23">
    <location>
        <begin position="1"/>
        <end position="117"/>
    </location>
</feature>
<name>RL23_RUMCH</name>